<protein>
    <recommendedName>
        <fullName evidence="1">2,3-bisphosphoglycerate-dependent phosphoglycerate mutase</fullName>
        <shortName evidence="1">BPG-dependent PGAM</shortName>
        <shortName evidence="1">PGAM</shortName>
        <shortName evidence="1">Phosphoglyceromutase</shortName>
        <shortName evidence="1">dPGM</shortName>
        <ecNumber evidence="1">5.4.2.11</ecNumber>
    </recommendedName>
</protein>
<feature type="chain" id="PRO_0000179902" description="2,3-bisphosphoglycerate-dependent phosphoglycerate mutase">
    <location>
        <begin position="1"/>
        <end position="248"/>
    </location>
</feature>
<feature type="active site" description="Tele-phosphohistidine intermediate" evidence="1">
    <location>
        <position position="9"/>
    </location>
</feature>
<feature type="active site" description="Proton donor/acceptor" evidence="1">
    <location>
        <position position="87"/>
    </location>
</feature>
<feature type="binding site" evidence="1">
    <location>
        <begin position="8"/>
        <end position="15"/>
    </location>
    <ligand>
        <name>substrate</name>
    </ligand>
</feature>
<feature type="binding site" evidence="1">
    <location>
        <begin position="21"/>
        <end position="22"/>
    </location>
    <ligand>
        <name>substrate</name>
    </ligand>
</feature>
<feature type="binding site" evidence="1">
    <location>
        <position position="60"/>
    </location>
    <ligand>
        <name>substrate</name>
    </ligand>
</feature>
<feature type="binding site" evidence="1">
    <location>
        <begin position="87"/>
        <end position="90"/>
    </location>
    <ligand>
        <name>substrate</name>
    </ligand>
</feature>
<feature type="binding site" evidence="1">
    <location>
        <position position="98"/>
    </location>
    <ligand>
        <name>substrate</name>
    </ligand>
</feature>
<feature type="binding site" evidence="1">
    <location>
        <begin position="114"/>
        <end position="115"/>
    </location>
    <ligand>
        <name>substrate</name>
    </ligand>
</feature>
<feature type="binding site" evidence="1">
    <location>
        <begin position="183"/>
        <end position="184"/>
    </location>
    <ligand>
        <name>substrate</name>
    </ligand>
</feature>
<feature type="site" description="Transition state stabilizer" evidence="1">
    <location>
        <position position="182"/>
    </location>
</feature>
<reference key="1">
    <citation type="journal article" date="2003" name="J. Bacteriol.">
        <title>Complete genome sequence of the oral pathogenic bacterium Porphyromonas gingivalis strain W83.</title>
        <authorList>
            <person name="Nelson K.E."/>
            <person name="Fleischmann R.D."/>
            <person name="DeBoy R.T."/>
            <person name="Paulsen I.T."/>
            <person name="Fouts D.E."/>
            <person name="Eisen J.A."/>
            <person name="Daugherty S.C."/>
            <person name="Dodson R.J."/>
            <person name="Durkin A.S."/>
            <person name="Gwinn M.L."/>
            <person name="Haft D.H."/>
            <person name="Kolonay J.F."/>
            <person name="Nelson W.C."/>
            <person name="Mason T.M."/>
            <person name="Tallon L."/>
            <person name="Gray J."/>
            <person name="Granger D."/>
            <person name="Tettelin H."/>
            <person name="Dong H."/>
            <person name="Galvin J.L."/>
            <person name="Duncan M.J."/>
            <person name="Dewhirst F.E."/>
            <person name="Fraser C.M."/>
        </authorList>
    </citation>
    <scope>NUCLEOTIDE SEQUENCE [LARGE SCALE GENOMIC DNA]</scope>
    <source>
        <strain>ATCC BAA-308 / W83</strain>
    </source>
</reference>
<organism>
    <name type="scientific">Porphyromonas gingivalis (strain ATCC BAA-308 / W83)</name>
    <dbReference type="NCBI Taxonomy" id="242619"/>
    <lineage>
        <taxon>Bacteria</taxon>
        <taxon>Pseudomonadati</taxon>
        <taxon>Bacteroidota</taxon>
        <taxon>Bacteroidia</taxon>
        <taxon>Bacteroidales</taxon>
        <taxon>Porphyromonadaceae</taxon>
        <taxon>Porphyromonas</taxon>
    </lineage>
</organism>
<proteinExistence type="inferred from homology"/>
<evidence type="ECO:0000255" key="1">
    <source>
        <dbReference type="HAMAP-Rule" id="MF_01039"/>
    </source>
</evidence>
<gene>
    <name evidence="1" type="primary">gpmA</name>
    <name type="synonym">gpm</name>
    <name type="ordered locus">PG_0130</name>
</gene>
<accession>Q7MXP1</accession>
<sequence>MKRIVLIRHGESLWNKENRFTGWTDVDLSEKGIEEAKKAGELMKKEGFQFTKAYTSYLKRAVKTLNGVLDVMDLDWIPVEKTWRLNEKHYGMLQGLNKAETAEKYGDEQVLIWRRSYDVPPTPMEKEDPRSPFMDPRYKGVCEKDLPLTEALCDTVNRILPYWNETIFPTLKEHDEVLVAAHGNSLRGIIKVLKNISDEDIISLNLPTAVPYVFEFDDNLRLVKDYFLGDPEEIKKLMEAVANQGKKK</sequence>
<comment type="function">
    <text evidence="1">Catalyzes the interconversion of 2-phosphoglycerate and 3-phosphoglycerate.</text>
</comment>
<comment type="catalytic activity">
    <reaction evidence="1">
        <text>(2R)-2-phosphoglycerate = (2R)-3-phosphoglycerate</text>
        <dbReference type="Rhea" id="RHEA:15901"/>
        <dbReference type="ChEBI" id="CHEBI:58272"/>
        <dbReference type="ChEBI" id="CHEBI:58289"/>
        <dbReference type="EC" id="5.4.2.11"/>
    </reaction>
</comment>
<comment type="pathway">
    <text evidence="1">Carbohydrate degradation; glycolysis; pyruvate from D-glyceraldehyde 3-phosphate: step 3/5.</text>
</comment>
<comment type="similarity">
    <text evidence="1">Belongs to the phosphoglycerate mutase family. BPG-dependent PGAM subfamily.</text>
</comment>
<name>GPMA_PORGI</name>
<dbReference type="EC" id="5.4.2.11" evidence="1"/>
<dbReference type="EMBL" id="AE015924">
    <property type="protein sequence ID" value="AAQ65372.1"/>
    <property type="molecule type" value="Genomic_DNA"/>
</dbReference>
<dbReference type="RefSeq" id="WP_005875265.1">
    <property type="nucleotide sequence ID" value="NC_002950.2"/>
</dbReference>
<dbReference type="SMR" id="Q7MXP1"/>
<dbReference type="STRING" id="242619.PG_0130"/>
<dbReference type="EnsemblBacteria" id="AAQ65372">
    <property type="protein sequence ID" value="AAQ65372"/>
    <property type="gene ID" value="PG_0130"/>
</dbReference>
<dbReference type="GeneID" id="29255492"/>
<dbReference type="GeneID" id="57240383"/>
<dbReference type="KEGG" id="pgi:PG_0130"/>
<dbReference type="eggNOG" id="COG0588">
    <property type="taxonomic scope" value="Bacteria"/>
</dbReference>
<dbReference type="HOGENOM" id="CLU_033323_1_1_10"/>
<dbReference type="UniPathway" id="UPA00109">
    <property type="reaction ID" value="UER00186"/>
</dbReference>
<dbReference type="Proteomes" id="UP000000588">
    <property type="component" value="Chromosome"/>
</dbReference>
<dbReference type="GO" id="GO:0004619">
    <property type="term" value="F:phosphoglycerate mutase activity"/>
    <property type="evidence" value="ECO:0007669"/>
    <property type="project" value="UniProtKB-EC"/>
</dbReference>
<dbReference type="GO" id="GO:0006094">
    <property type="term" value="P:gluconeogenesis"/>
    <property type="evidence" value="ECO:0007669"/>
    <property type="project" value="UniProtKB-UniRule"/>
</dbReference>
<dbReference type="GO" id="GO:0006096">
    <property type="term" value="P:glycolytic process"/>
    <property type="evidence" value="ECO:0007669"/>
    <property type="project" value="UniProtKB-UniRule"/>
</dbReference>
<dbReference type="CDD" id="cd07067">
    <property type="entry name" value="HP_PGM_like"/>
    <property type="match status" value="1"/>
</dbReference>
<dbReference type="FunFam" id="3.40.50.1240:FF:000003">
    <property type="entry name" value="2,3-bisphosphoglycerate-dependent phosphoglycerate mutase"/>
    <property type="match status" value="1"/>
</dbReference>
<dbReference type="Gene3D" id="3.40.50.1240">
    <property type="entry name" value="Phosphoglycerate mutase-like"/>
    <property type="match status" value="1"/>
</dbReference>
<dbReference type="HAMAP" id="MF_01039">
    <property type="entry name" value="PGAM_GpmA"/>
    <property type="match status" value="1"/>
</dbReference>
<dbReference type="InterPro" id="IPR013078">
    <property type="entry name" value="His_Pase_superF_clade-1"/>
</dbReference>
<dbReference type="InterPro" id="IPR029033">
    <property type="entry name" value="His_PPase_superfam"/>
</dbReference>
<dbReference type="InterPro" id="IPR001345">
    <property type="entry name" value="PG/BPGM_mutase_AS"/>
</dbReference>
<dbReference type="InterPro" id="IPR005952">
    <property type="entry name" value="Phosphogly_mut1"/>
</dbReference>
<dbReference type="NCBIfam" id="TIGR01258">
    <property type="entry name" value="pgm_1"/>
    <property type="match status" value="1"/>
</dbReference>
<dbReference type="NCBIfam" id="NF010713">
    <property type="entry name" value="PRK14115.1"/>
    <property type="match status" value="1"/>
</dbReference>
<dbReference type="PANTHER" id="PTHR11931">
    <property type="entry name" value="PHOSPHOGLYCERATE MUTASE"/>
    <property type="match status" value="1"/>
</dbReference>
<dbReference type="Pfam" id="PF00300">
    <property type="entry name" value="His_Phos_1"/>
    <property type="match status" value="1"/>
</dbReference>
<dbReference type="PIRSF" id="PIRSF000709">
    <property type="entry name" value="6PFK_2-Ptase"/>
    <property type="match status" value="1"/>
</dbReference>
<dbReference type="SMART" id="SM00855">
    <property type="entry name" value="PGAM"/>
    <property type="match status" value="1"/>
</dbReference>
<dbReference type="SUPFAM" id="SSF53254">
    <property type="entry name" value="Phosphoglycerate mutase-like"/>
    <property type="match status" value="1"/>
</dbReference>
<dbReference type="PROSITE" id="PS00175">
    <property type="entry name" value="PG_MUTASE"/>
    <property type="match status" value="1"/>
</dbReference>
<keyword id="KW-0312">Gluconeogenesis</keyword>
<keyword id="KW-0324">Glycolysis</keyword>
<keyword id="KW-0413">Isomerase</keyword>
<keyword id="KW-1185">Reference proteome</keyword>